<proteinExistence type="inferred from homology"/>
<dbReference type="EMBL" id="U30483">
    <property type="protein sequence ID" value="AAA93166.1"/>
    <property type="molecule type" value="Genomic_DNA"/>
</dbReference>
<dbReference type="PIR" id="T48878">
    <property type="entry name" value="T48878"/>
</dbReference>
<dbReference type="SMR" id="Q59565"/>
<dbReference type="GO" id="GO:0005737">
    <property type="term" value="C:cytoplasm"/>
    <property type="evidence" value="ECO:0007669"/>
    <property type="project" value="UniProtKB-SubCell"/>
</dbReference>
<dbReference type="GO" id="GO:0019773">
    <property type="term" value="C:proteasome core complex, alpha-subunit complex"/>
    <property type="evidence" value="ECO:0000250"/>
    <property type="project" value="UniProtKB"/>
</dbReference>
<dbReference type="GO" id="GO:0004298">
    <property type="term" value="F:threonine-type endopeptidase activity"/>
    <property type="evidence" value="ECO:0007669"/>
    <property type="project" value="InterPro"/>
</dbReference>
<dbReference type="GO" id="GO:0010498">
    <property type="term" value="P:proteasomal protein catabolic process"/>
    <property type="evidence" value="ECO:0007669"/>
    <property type="project" value="UniProtKB-UniRule"/>
</dbReference>
<dbReference type="GO" id="GO:0006511">
    <property type="term" value="P:ubiquitin-dependent protein catabolic process"/>
    <property type="evidence" value="ECO:0007669"/>
    <property type="project" value="InterPro"/>
</dbReference>
<dbReference type="CDD" id="cd03756">
    <property type="entry name" value="proteasome_alpha_archeal"/>
    <property type="match status" value="1"/>
</dbReference>
<dbReference type="FunFam" id="3.60.20.10:FF:000004">
    <property type="entry name" value="Proteasome subunit alpha type-4"/>
    <property type="match status" value="1"/>
</dbReference>
<dbReference type="Gene3D" id="3.60.20.10">
    <property type="entry name" value="Glutamine Phosphoribosylpyrophosphate, subunit 1, domain 1"/>
    <property type="match status" value="1"/>
</dbReference>
<dbReference type="HAMAP" id="MF_00289_A">
    <property type="entry name" value="Proteasome_A_A"/>
    <property type="match status" value="1"/>
</dbReference>
<dbReference type="InterPro" id="IPR029055">
    <property type="entry name" value="Ntn_hydrolases_N"/>
</dbReference>
<dbReference type="InterPro" id="IPR050115">
    <property type="entry name" value="Proteasome_alpha"/>
</dbReference>
<dbReference type="InterPro" id="IPR023332">
    <property type="entry name" value="Proteasome_alpha-type"/>
</dbReference>
<dbReference type="InterPro" id="IPR019982">
    <property type="entry name" value="Proteasome_asu_arc"/>
</dbReference>
<dbReference type="InterPro" id="IPR000426">
    <property type="entry name" value="Proteasome_asu_N"/>
</dbReference>
<dbReference type="InterPro" id="IPR001353">
    <property type="entry name" value="Proteasome_sua/b"/>
</dbReference>
<dbReference type="NCBIfam" id="TIGR03633">
    <property type="entry name" value="arc_protsome_A"/>
    <property type="match status" value="1"/>
</dbReference>
<dbReference type="NCBIfam" id="NF003075">
    <property type="entry name" value="PRK03996.1"/>
    <property type="match status" value="1"/>
</dbReference>
<dbReference type="PANTHER" id="PTHR11599">
    <property type="entry name" value="PROTEASOME SUBUNIT ALPHA/BETA"/>
    <property type="match status" value="1"/>
</dbReference>
<dbReference type="Pfam" id="PF00227">
    <property type="entry name" value="Proteasome"/>
    <property type="match status" value="1"/>
</dbReference>
<dbReference type="Pfam" id="PF10584">
    <property type="entry name" value="Proteasome_A_N"/>
    <property type="match status" value="1"/>
</dbReference>
<dbReference type="SMART" id="SM00948">
    <property type="entry name" value="Proteasome_A_N"/>
    <property type="match status" value="1"/>
</dbReference>
<dbReference type="SUPFAM" id="SSF56235">
    <property type="entry name" value="N-terminal nucleophile aminohydrolases (Ntn hydrolases)"/>
    <property type="match status" value="1"/>
</dbReference>
<dbReference type="PROSITE" id="PS00388">
    <property type="entry name" value="PROTEASOME_ALPHA_1"/>
    <property type="match status" value="1"/>
</dbReference>
<dbReference type="PROSITE" id="PS51475">
    <property type="entry name" value="PROTEASOME_ALPHA_2"/>
    <property type="match status" value="1"/>
</dbReference>
<sequence length="247" mass="27155">MAPQMGYDRAITVFSPDGRLFQVEYAREAVKRGTTAVGIKAADGVVLLVDKRITSRLVEAESIEKIFQIDDHIGAATSGLVADARALVDRARVEAQVNRVSYDELIGVEVISKKICDHKQTYTQYGGVRPYGTALLIAGVDDKRPRLFETDPSGALLEYKATAIGAGRNAVVEVFEADYKEDMNIEAAILLGMDALYKAAEGKFDAGTLEVGVVSLQDKKFRKLEPEEVGNYVQQILEKHKETENKE</sequence>
<comment type="function">
    <text evidence="1">Component of the proteasome core, a large protease complex with broad specificity involved in protein degradation.</text>
</comment>
<comment type="activity regulation">
    <text evidence="1">The formation of the proteasomal ATPase PAN-20S proteasome complex, via the docking of the C-termini of PAN into the intersubunit pockets in the alpha-rings, triggers opening of the gate for substrate entry. Interconversion between the open-gate and close-gate conformations leads to a dynamic regulation of the 20S proteasome proteolysis activity.</text>
</comment>
<comment type="subunit">
    <text evidence="1">The 20S proteasome core is composed of 14 alpha and 14 beta subunits that assemble into four stacked heptameric rings, resulting in a barrel-shaped structure. The two inner rings, each composed of seven catalytic beta subunits, are sandwiched by two outer rings, each composed of seven alpha subunits. The catalytic chamber with the active sites is on the inside of the barrel. Has a gated structure, the ends of the cylinder being occluded by the N-termini of the alpha-subunits. Is capped at one or both ends by the proteasome regulatory ATPase, PAN.</text>
</comment>
<comment type="subcellular location">
    <subcellularLocation>
        <location>Cytoplasm</location>
    </subcellularLocation>
</comment>
<comment type="similarity">
    <text evidence="1">Belongs to the peptidase T1A family.</text>
</comment>
<protein>
    <recommendedName>
        <fullName evidence="1">Proteasome subunit alpha</fullName>
    </recommendedName>
    <alternativeName>
        <fullName evidence="1">20S proteasome alpha subunit</fullName>
    </alternativeName>
    <alternativeName>
        <fullName evidence="1">Proteasome core protein PsmA</fullName>
    </alternativeName>
</protein>
<feature type="chain" id="PRO_0000124178" description="Proteasome subunit alpha">
    <location>
        <begin position="1"/>
        <end position="247"/>
    </location>
</feature>
<reference key="1">
    <citation type="journal article" date="1995" name="J. Biol. Chem.">
        <title>A proteasome from the methanogenic archaeon Methanosarcina thermophila.</title>
        <authorList>
            <person name="Maupin-Furlow J.A."/>
            <person name="Ferry J.G."/>
        </authorList>
    </citation>
    <scope>NUCLEOTIDE SEQUENCE [GENOMIC DNA]</scope>
    <source>
        <strain>ATCC 43570 / DSM 1825 / OCM 12 / TM-1</strain>
    </source>
</reference>
<name>PSA_METTE</name>
<keyword id="KW-0963">Cytoplasm</keyword>
<keyword id="KW-0647">Proteasome</keyword>
<accession>Q59565</accession>
<organism>
    <name type="scientific">Methanosarcina thermophila</name>
    <dbReference type="NCBI Taxonomy" id="2210"/>
    <lineage>
        <taxon>Archaea</taxon>
        <taxon>Methanobacteriati</taxon>
        <taxon>Methanobacteriota</taxon>
        <taxon>Stenosarchaea group</taxon>
        <taxon>Methanomicrobia</taxon>
        <taxon>Methanosarcinales</taxon>
        <taxon>Methanosarcinaceae</taxon>
        <taxon>Methanosarcina</taxon>
    </lineage>
</organism>
<gene>
    <name evidence="1" type="primary">psmA</name>
</gene>
<evidence type="ECO:0000255" key="1">
    <source>
        <dbReference type="HAMAP-Rule" id="MF_00289"/>
    </source>
</evidence>